<reference key="1">
    <citation type="journal article" date="2010" name="J. Bacteriol.">
        <title>Complete genome sequence of Beijerinckia indica subsp. indica.</title>
        <authorList>
            <person name="Tamas I."/>
            <person name="Dedysh S.N."/>
            <person name="Liesack W."/>
            <person name="Stott M.B."/>
            <person name="Alam M."/>
            <person name="Murrell J.C."/>
            <person name="Dunfield P.F."/>
        </authorList>
    </citation>
    <scope>NUCLEOTIDE SEQUENCE [LARGE SCALE GENOMIC DNA]</scope>
    <source>
        <strain>ATCC 9039 / DSM 1715 / NCIMB 8712</strain>
    </source>
</reference>
<name>RPOA_BEII9</name>
<proteinExistence type="inferred from homology"/>
<feature type="chain" id="PRO_1000196626" description="DNA-directed RNA polymerase subunit alpha">
    <location>
        <begin position="1"/>
        <end position="338"/>
    </location>
</feature>
<feature type="region of interest" description="Alpha N-terminal domain (alpha-NTD)" evidence="1">
    <location>
        <begin position="1"/>
        <end position="234"/>
    </location>
</feature>
<feature type="region of interest" description="Alpha C-terminal domain (alpha-CTD)" evidence="1">
    <location>
        <begin position="250"/>
        <end position="338"/>
    </location>
</feature>
<keyword id="KW-0240">DNA-directed RNA polymerase</keyword>
<keyword id="KW-0548">Nucleotidyltransferase</keyword>
<keyword id="KW-1185">Reference proteome</keyword>
<keyword id="KW-0804">Transcription</keyword>
<keyword id="KW-0808">Transferase</keyword>
<accession>B2IF96</accession>
<sequence>MIQKNWQELIKPSKLDVTPGDDSKRFATIIAEPLERGFGLTLGNALRRILLSSLQGAAITSVHIDGVLHEFSSIPGVREDVTDIILNIKDIAIKMQGEGPKRMVLKKQGPGKVLAGDIGAVGDVQILNPNLVICTLDEGAEIRMEFTVNTGKGYVAADRNRAEDAPIGLIPVDSLYSPVKKVSYKVENTREGQILDYDKLTLQIETNGSLTPEDAVAFSARILQDQLNVFVNFEEPRREEATPSIPELAFNPALLKKVDELELSVRSANCLKNDNIVYIGDLIQKTEAEMLRTPNFGRKSLNEIKEVLAQMGLHLGMEVTGWPPDNIDELAKRFEEHY</sequence>
<gene>
    <name evidence="1" type="primary">rpoA</name>
    <name type="ordered locus">Bind_2039</name>
</gene>
<comment type="function">
    <text evidence="1">DNA-dependent RNA polymerase catalyzes the transcription of DNA into RNA using the four ribonucleoside triphosphates as substrates.</text>
</comment>
<comment type="catalytic activity">
    <reaction evidence="1">
        <text>RNA(n) + a ribonucleoside 5'-triphosphate = RNA(n+1) + diphosphate</text>
        <dbReference type="Rhea" id="RHEA:21248"/>
        <dbReference type="Rhea" id="RHEA-COMP:14527"/>
        <dbReference type="Rhea" id="RHEA-COMP:17342"/>
        <dbReference type="ChEBI" id="CHEBI:33019"/>
        <dbReference type="ChEBI" id="CHEBI:61557"/>
        <dbReference type="ChEBI" id="CHEBI:140395"/>
        <dbReference type="EC" id="2.7.7.6"/>
    </reaction>
</comment>
<comment type="subunit">
    <text evidence="1">Homodimer. The RNAP catalytic core consists of 2 alpha, 1 beta, 1 beta' and 1 omega subunit. When a sigma factor is associated with the core the holoenzyme is formed, which can initiate transcription.</text>
</comment>
<comment type="domain">
    <text evidence="1">The N-terminal domain is essential for RNAP assembly and basal transcription, whereas the C-terminal domain is involved in interaction with transcriptional regulators and with upstream promoter elements.</text>
</comment>
<comment type="similarity">
    <text evidence="1">Belongs to the RNA polymerase alpha chain family.</text>
</comment>
<organism>
    <name type="scientific">Beijerinckia indica subsp. indica (strain ATCC 9039 / DSM 1715 / NCIMB 8712)</name>
    <dbReference type="NCBI Taxonomy" id="395963"/>
    <lineage>
        <taxon>Bacteria</taxon>
        <taxon>Pseudomonadati</taxon>
        <taxon>Pseudomonadota</taxon>
        <taxon>Alphaproteobacteria</taxon>
        <taxon>Hyphomicrobiales</taxon>
        <taxon>Beijerinckiaceae</taxon>
        <taxon>Beijerinckia</taxon>
    </lineage>
</organism>
<dbReference type="EC" id="2.7.7.6" evidence="1"/>
<dbReference type="EMBL" id="CP001016">
    <property type="protein sequence ID" value="ACB95661.1"/>
    <property type="molecule type" value="Genomic_DNA"/>
</dbReference>
<dbReference type="RefSeq" id="WP_012385017.1">
    <property type="nucleotide sequence ID" value="NC_010581.1"/>
</dbReference>
<dbReference type="SMR" id="B2IF96"/>
<dbReference type="STRING" id="395963.Bind_2039"/>
<dbReference type="KEGG" id="bid:Bind_2039"/>
<dbReference type="eggNOG" id="COG0202">
    <property type="taxonomic scope" value="Bacteria"/>
</dbReference>
<dbReference type="HOGENOM" id="CLU_053084_0_1_5"/>
<dbReference type="OrthoDB" id="9805706at2"/>
<dbReference type="Proteomes" id="UP000001695">
    <property type="component" value="Chromosome"/>
</dbReference>
<dbReference type="GO" id="GO:0005737">
    <property type="term" value="C:cytoplasm"/>
    <property type="evidence" value="ECO:0007669"/>
    <property type="project" value="UniProtKB-ARBA"/>
</dbReference>
<dbReference type="GO" id="GO:0000428">
    <property type="term" value="C:DNA-directed RNA polymerase complex"/>
    <property type="evidence" value="ECO:0007669"/>
    <property type="project" value="UniProtKB-KW"/>
</dbReference>
<dbReference type="GO" id="GO:0003677">
    <property type="term" value="F:DNA binding"/>
    <property type="evidence" value="ECO:0007669"/>
    <property type="project" value="UniProtKB-UniRule"/>
</dbReference>
<dbReference type="GO" id="GO:0003899">
    <property type="term" value="F:DNA-directed RNA polymerase activity"/>
    <property type="evidence" value="ECO:0007669"/>
    <property type="project" value="UniProtKB-UniRule"/>
</dbReference>
<dbReference type="GO" id="GO:0046983">
    <property type="term" value="F:protein dimerization activity"/>
    <property type="evidence" value="ECO:0007669"/>
    <property type="project" value="InterPro"/>
</dbReference>
<dbReference type="GO" id="GO:0006351">
    <property type="term" value="P:DNA-templated transcription"/>
    <property type="evidence" value="ECO:0007669"/>
    <property type="project" value="UniProtKB-UniRule"/>
</dbReference>
<dbReference type="CDD" id="cd06928">
    <property type="entry name" value="RNAP_alpha_NTD"/>
    <property type="match status" value="1"/>
</dbReference>
<dbReference type="FunFam" id="1.10.150.20:FF:000001">
    <property type="entry name" value="DNA-directed RNA polymerase subunit alpha"/>
    <property type="match status" value="1"/>
</dbReference>
<dbReference type="FunFam" id="2.170.120.12:FF:000001">
    <property type="entry name" value="DNA-directed RNA polymerase subunit alpha"/>
    <property type="match status" value="1"/>
</dbReference>
<dbReference type="Gene3D" id="1.10.150.20">
    <property type="entry name" value="5' to 3' exonuclease, C-terminal subdomain"/>
    <property type="match status" value="1"/>
</dbReference>
<dbReference type="Gene3D" id="2.170.120.12">
    <property type="entry name" value="DNA-directed RNA polymerase, insert domain"/>
    <property type="match status" value="1"/>
</dbReference>
<dbReference type="Gene3D" id="3.30.1360.10">
    <property type="entry name" value="RNA polymerase, RBP11-like subunit"/>
    <property type="match status" value="1"/>
</dbReference>
<dbReference type="HAMAP" id="MF_00059">
    <property type="entry name" value="RNApol_bact_RpoA"/>
    <property type="match status" value="1"/>
</dbReference>
<dbReference type="InterPro" id="IPR011262">
    <property type="entry name" value="DNA-dir_RNA_pol_insert"/>
</dbReference>
<dbReference type="InterPro" id="IPR011263">
    <property type="entry name" value="DNA-dir_RNA_pol_RpoA/D/Rpb3"/>
</dbReference>
<dbReference type="InterPro" id="IPR011773">
    <property type="entry name" value="DNA-dir_RpoA"/>
</dbReference>
<dbReference type="InterPro" id="IPR036603">
    <property type="entry name" value="RBP11-like"/>
</dbReference>
<dbReference type="InterPro" id="IPR011260">
    <property type="entry name" value="RNAP_asu_C"/>
</dbReference>
<dbReference type="InterPro" id="IPR036643">
    <property type="entry name" value="RNApol_insert_sf"/>
</dbReference>
<dbReference type="NCBIfam" id="NF003513">
    <property type="entry name" value="PRK05182.1-2"/>
    <property type="match status" value="1"/>
</dbReference>
<dbReference type="NCBIfam" id="NF003519">
    <property type="entry name" value="PRK05182.2-5"/>
    <property type="match status" value="1"/>
</dbReference>
<dbReference type="NCBIfam" id="TIGR02027">
    <property type="entry name" value="rpoA"/>
    <property type="match status" value="1"/>
</dbReference>
<dbReference type="Pfam" id="PF01000">
    <property type="entry name" value="RNA_pol_A_bac"/>
    <property type="match status" value="1"/>
</dbReference>
<dbReference type="Pfam" id="PF03118">
    <property type="entry name" value="RNA_pol_A_CTD"/>
    <property type="match status" value="1"/>
</dbReference>
<dbReference type="Pfam" id="PF01193">
    <property type="entry name" value="RNA_pol_L"/>
    <property type="match status" value="1"/>
</dbReference>
<dbReference type="SMART" id="SM00662">
    <property type="entry name" value="RPOLD"/>
    <property type="match status" value="1"/>
</dbReference>
<dbReference type="SUPFAM" id="SSF47789">
    <property type="entry name" value="C-terminal domain of RNA polymerase alpha subunit"/>
    <property type="match status" value="1"/>
</dbReference>
<dbReference type="SUPFAM" id="SSF56553">
    <property type="entry name" value="Insert subdomain of RNA polymerase alpha subunit"/>
    <property type="match status" value="1"/>
</dbReference>
<dbReference type="SUPFAM" id="SSF55257">
    <property type="entry name" value="RBP11-like subunits of RNA polymerase"/>
    <property type="match status" value="1"/>
</dbReference>
<protein>
    <recommendedName>
        <fullName evidence="1">DNA-directed RNA polymerase subunit alpha</fullName>
        <shortName evidence="1">RNAP subunit alpha</shortName>
        <ecNumber evidence="1">2.7.7.6</ecNumber>
    </recommendedName>
    <alternativeName>
        <fullName evidence="1">RNA polymerase subunit alpha</fullName>
    </alternativeName>
    <alternativeName>
        <fullName evidence="1">Transcriptase subunit alpha</fullName>
    </alternativeName>
</protein>
<evidence type="ECO:0000255" key="1">
    <source>
        <dbReference type="HAMAP-Rule" id="MF_00059"/>
    </source>
</evidence>